<name>NFI_NATPD</name>
<protein>
    <recommendedName>
        <fullName evidence="1">Endonuclease V</fullName>
        <ecNumber evidence="1">3.1.21.7</ecNumber>
    </recommendedName>
    <alternativeName>
        <fullName evidence="1">Deoxyinosine 3'endonuclease</fullName>
    </alternativeName>
    <alternativeName>
        <fullName evidence="1">Deoxyribonuclease V</fullName>
        <shortName evidence="1">DNase V</shortName>
    </alternativeName>
</protein>
<feature type="chain" id="PRO_1000047000" description="Endonuclease V">
    <location>
        <begin position="1"/>
        <end position="248"/>
    </location>
</feature>
<feature type="binding site" evidence="1">
    <location>
        <position position="54"/>
    </location>
    <ligand>
        <name>Mg(2+)</name>
        <dbReference type="ChEBI" id="CHEBI:18420"/>
    </ligand>
</feature>
<feature type="binding site" evidence="1">
    <location>
        <position position="118"/>
    </location>
    <ligand>
        <name>Mg(2+)</name>
        <dbReference type="ChEBI" id="CHEBI:18420"/>
    </ligand>
</feature>
<feature type="site" description="Interaction with target DNA" evidence="1">
    <location>
        <position position="88"/>
    </location>
</feature>
<accession>Q3IT64</accession>
<sequence>MELATPRFRPDPSLSREAMETLQHDIAAAASFENEASPSPAAIRDGDALVAGVDQAFLDDRAVSAVVVLRGGEVVAREHAVTPLSIPYIPGLLAFREGGPIIDALSRLDVEPDLLVVDGSGRIHFREAGLATHAGLLFDVPAVGVAKRLLCGEPSRTVASLPEGTRVPIEADDSMTAADGTVVGYAYQSRQYPDSKRINPLYISPGHRLCAETAVDCVAACGGEYKLPRPTRLADGHADDLKARYGDG</sequence>
<dbReference type="EC" id="3.1.21.7" evidence="1"/>
<dbReference type="EMBL" id="CR936257">
    <property type="protein sequence ID" value="CAI48670.1"/>
    <property type="molecule type" value="Genomic_DNA"/>
</dbReference>
<dbReference type="RefSeq" id="WP_011322306.1">
    <property type="nucleotide sequence ID" value="NC_007426.1"/>
</dbReference>
<dbReference type="SMR" id="Q3IT64"/>
<dbReference type="STRING" id="348780.NP_1158A"/>
<dbReference type="EnsemblBacteria" id="CAI48670">
    <property type="protein sequence ID" value="CAI48670"/>
    <property type="gene ID" value="NP_1158A"/>
</dbReference>
<dbReference type="GeneID" id="3702972"/>
<dbReference type="KEGG" id="nph:NP_1158A"/>
<dbReference type="eggNOG" id="arCOG00929">
    <property type="taxonomic scope" value="Archaea"/>
</dbReference>
<dbReference type="HOGENOM" id="CLU_047631_2_0_2"/>
<dbReference type="OrthoDB" id="7885at2157"/>
<dbReference type="Proteomes" id="UP000002698">
    <property type="component" value="Chromosome"/>
</dbReference>
<dbReference type="GO" id="GO:0005737">
    <property type="term" value="C:cytoplasm"/>
    <property type="evidence" value="ECO:0007669"/>
    <property type="project" value="UniProtKB-SubCell"/>
</dbReference>
<dbReference type="GO" id="GO:0043737">
    <property type="term" value="F:deoxyribonuclease V activity"/>
    <property type="evidence" value="ECO:0007669"/>
    <property type="project" value="UniProtKB-UniRule"/>
</dbReference>
<dbReference type="GO" id="GO:0000287">
    <property type="term" value="F:magnesium ion binding"/>
    <property type="evidence" value="ECO:0007669"/>
    <property type="project" value="UniProtKB-UniRule"/>
</dbReference>
<dbReference type="GO" id="GO:0016891">
    <property type="term" value="F:RNA endonuclease activity, producing 5'-phosphomonoesters"/>
    <property type="evidence" value="ECO:0007669"/>
    <property type="project" value="TreeGrafter"/>
</dbReference>
<dbReference type="GO" id="GO:0003727">
    <property type="term" value="F:single-stranded RNA binding"/>
    <property type="evidence" value="ECO:0007669"/>
    <property type="project" value="TreeGrafter"/>
</dbReference>
<dbReference type="GO" id="GO:0006281">
    <property type="term" value="P:DNA repair"/>
    <property type="evidence" value="ECO:0007669"/>
    <property type="project" value="UniProtKB-UniRule"/>
</dbReference>
<dbReference type="CDD" id="cd06559">
    <property type="entry name" value="Endonuclease_V"/>
    <property type="match status" value="1"/>
</dbReference>
<dbReference type="Gene3D" id="3.30.2170.10">
    <property type="entry name" value="archaeoglobus fulgidus dsm 4304 superfamily"/>
    <property type="match status" value="1"/>
</dbReference>
<dbReference type="HAMAP" id="MF_00801">
    <property type="entry name" value="Endonuclease_5"/>
    <property type="match status" value="1"/>
</dbReference>
<dbReference type="InterPro" id="IPR007581">
    <property type="entry name" value="Endonuclease-V"/>
</dbReference>
<dbReference type="PANTHER" id="PTHR28511">
    <property type="entry name" value="ENDONUCLEASE V"/>
    <property type="match status" value="1"/>
</dbReference>
<dbReference type="PANTHER" id="PTHR28511:SF1">
    <property type="entry name" value="ENDONUCLEASE V"/>
    <property type="match status" value="1"/>
</dbReference>
<dbReference type="Pfam" id="PF04493">
    <property type="entry name" value="Endonuclease_5"/>
    <property type="match status" value="1"/>
</dbReference>
<comment type="function">
    <text evidence="1">DNA repair enzyme involved in the repair of deaminated bases. Selectively cleaves double-stranded DNA at the second phosphodiester bond 3' to a deoxyinosine leaving behind the intact lesion on the nicked DNA.</text>
</comment>
<comment type="catalytic activity">
    <reaction evidence="1">
        <text>Endonucleolytic cleavage at apurinic or apyrimidinic sites to products with a 5'-phosphate.</text>
        <dbReference type="EC" id="3.1.21.7"/>
    </reaction>
</comment>
<comment type="cofactor">
    <cofactor evidence="1">
        <name>Mg(2+)</name>
        <dbReference type="ChEBI" id="CHEBI:18420"/>
    </cofactor>
</comment>
<comment type="subcellular location">
    <subcellularLocation>
        <location evidence="1">Cytoplasm</location>
    </subcellularLocation>
</comment>
<comment type="similarity">
    <text evidence="1">Belongs to the endonuclease V family.</text>
</comment>
<reference key="1">
    <citation type="journal article" date="2005" name="Genome Res.">
        <title>Living with two extremes: conclusions from the genome sequence of Natronomonas pharaonis.</title>
        <authorList>
            <person name="Falb M."/>
            <person name="Pfeiffer F."/>
            <person name="Palm P."/>
            <person name="Rodewald K."/>
            <person name="Hickmann V."/>
            <person name="Tittor J."/>
            <person name="Oesterhelt D."/>
        </authorList>
    </citation>
    <scope>NUCLEOTIDE SEQUENCE [LARGE SCALE GENOMIC DNA]</scope>
    <source>
        <strain>ATCC 35678 / DSM 2160 / CIP 103997 / JCM 8858 / NBRC 14720 / NCIMB 2260 / Gabara</strain>
    </source>
</reference>
<proteinExistence type="inferred from homology"/>
<gene>
    <name evidence="1" type="primary">nfi</name>
    <name type="ordered locus">NP_1158A</name>
</gene>
<keyword id="KW-0963">Cytoplasm</keyword>
<keyword id="KW-0227">DNA damage</keyword>
<keyword id="KW-0234">DNA repair</keyword>
<keyword id="KW-0255">Endonuclease</keyword>
<keyword id="KW-0378">Hydrolase</keyword>
<keyword id="KW-0460">Magnesium</keyword>
<keyword id="KW-0479">Metal-binding</keyword>
<keyword id="KW-0540">Nuclease</keyword>
<keyword id="KW-1185">Reference proteome</keyword>
<organism>
    <name type="scientific">Natronomonas pharaonis (strain ATCC 35678 / DSM 2160 / CIP 103997 / JCM 8858 / NBRC 14720 / NCIMB 2260 / Gabara)</name>
    <name type="common">Halobacterium pharaonis</name>
    <dbReference type="NCBI Taxonomy" id="348780"/>
    <lineage>
        <taxon>Archaea</taxon>
        <taxon>Methanobacteriati</taxon>
        <taxon>Methanobacteriota</taxon>
        <taxon>Stenosarchaea group</taxon>
        <taxon>Halobacteria</taxon>
        <taxon>Halobacteriales</taxon>
        <taxon>Haloarculaceae</taxon>
        <taxon>Natronomonas</taxon>
    </lineage>
</organism>
<evidence type="ECO:0000255" key="1">
    <source>
        <dbReference type="HAMAP-Rule" id="MF_00801"/>
    </source>
</evidence>